<feature type="signal peptide" evidence="3">
    <location>
        <begin position="1"/>
        <end position="24"/>
    </location>
</feature>
<feature type="chain" id="PRO_0000015547" description="Interleukin-13">
    <location>
        <begin position="25"/>
        <end position="146"/>
    </location>
</feature>
<feature type="glycosylation site" description="N-linked (GlcNAc...) asparagine" evidence="3">
    <location>
        <position position="52"/>
    </location>
</feature>
<feature type="glycosylation site" description="N-linked (GlcNAc...) asparagine" evidence="3">
    <location>
        <position position="63"/>
    </location>
</feature>
<feature type="glycosylation site" description="N-linked (GlcNAc...) asparagine" evidence="3">
    <location>
        <position position="71"/>
    </location>
</feature>
<feature type="glycosylation site" description="N-linked (GlcNAc...) asparagine" evidence="3">
    <location>
        <position position="86"/>
    </location>
</feature>
<feature type="disulfide bond" evidence="5 8">
    <location>
        <begin position="62"/>
        <end position="90"/>
    </location>
</feature>
<feature type="disulfide bond" evidence="5 8">
    <location>
        <begin position="78"/>
        <end position="104"/>
    </location>
</feature>
<feature type="sequence variant" id="VAR_010037" description="Probable protective factor against ALRH; may be associated with decreased risk for asthma development; at homozygosity may be associated with lower levels of serum total IgE in some allergic rhinitis patients; dbSNP:rs20541." evidence="4 6 7">
    <original>Q</original>
    <variation>R</variation>
    <location>
        <position position="144"/>
    </location>
</feature>
<feature type="sequence conflict" description="In Ref. 2; CAA48824." evidence="16" ref="2">
    <original>M</original>
    <variation>R</variation>
    <location>
        <position position="1"/>
    </location>
</feature>
<feature type="sequence conflict" description="In Ref. 9; no nucleotide entry." evidence="16" ref="9">
    <original>T</original>
    <variation>A</variation>
    <location>
        <position position="26"/>
    </location>
</feature>
<feature type="sequence conflict" description="In Ref. 9; no nucleotide entry." evidence="16" ref="9">
    <original>A</original>
    <variation>D</variation>
    <location>
        <position position="32"/>
    </location>
</feature>
<feature type="sequence conflict" description="In Ref. 9; no nucleotide entry." evidence="16" ref="9">
    <original>V</original>
    <variation>S</variation>
    <location>
        <position position="51"/>
    </location>
</feature>
<feature type="sequence conflict" description="In Ref. 9; no nucleotide entry." evidence="16" ref="9">
    <original>N</original>
    <variation>T</variation>
    <location>
        <position position="56"/>
    </location>
</feature>
<feature type="sequence conflict" description="In Ref. 3; AAA83738." evidence="16" ref="3">
    <original>A</original>
    <variation>R</variation>
    <location>
        <position position="59"/>
    </location>
</feature>
<feature type="sequence conflict" description="In Ref. 8; AAC03535." evidence="16" ref="8">
    <original>S</original>
    <variation>G</variation>
    <location>
        <position position="101"/>
    </location>
</feature>
<feature type="sequence conflict" description="In Ref. 3; AAA83738." evidence="16" ref="3">
    <location>
        <position position="112"/>
    </location>
</feature>
<feature type="helix" evidence="17">
    <location>
        <begin position="41"/>
        <end position="54"/>
    </location>
</feature>
<feature type="turn" evidence="17">
    <location>
        <begin position="61"/>
        <end position="64"/>
    </location>
</feature>
<feature type="strand" evidence="17">
    <location>
        <begin position="66"/>
        <end position="68"/>
    </location>
</feature>
<feature type="turn" evidence="17">
    <location>
        <begin position="74"/>
        <end position="76"/>
    </location>
</feature>
<feature type="helix" evidence="17">
    <location>
        <begin position="77"/>
        <end position="84"/>
    </location>
</feature>
<feature type="helix" evidence="17">
    <location>
        <begin position="91"/>
        <end position="93"/>
    </location>
</feature>
<feature type="helix" evidence="17">
    <location>
        <begin position="94"/>
        <end position="103"/>
    </location>
</feature>
<feature type="strand" evidence="18">
    <location>
        <begin position="104"/>
        <end position="106"/>
    </location>
</feature>
<feature type="helix" evidence="19">
    <location>
        <begin position="113"/>
        <end position="116"/>
    </location>
</feature>
<feature type="strand" evidence="17">
    <location>
        <begin position="122"/>
        <end position="124"/>
    </location>
</feature>
<feature type="helix" evidence="17">
    <location>
        <begin position="125"/>
        <end position="142"/>
    </location>
</feature>
<dbReference type="EMBL" id="X69079">
    <property type="protein sequence ID" value="CAA48823.1"/>
    <property type="molecule type" value="mRNA"/>
</dbReference>
<dbReference type="EMBL" id="X69079">
    <property type="protein sequence ID" value="CAA48824.1"/>
    <property type="status" value="ALT_INIT"/>
    <property type="molecule type" value="mRNA"/>
</dbReference>
<dbReference type="EMBL" id="L06801">
    <property type="protein sequence ID" value="AAA36107.1"/>
    <property type="status" value="ALT_INIT"/>
    <property type="molecule type" value="mRNA"/>
</dbReference>
<dbReference type="EMBL" id="U10307">
    <property type="protein sequence ID" value="AAA83738.1"/>
    <property type="status" value="ALT_INIT"/>
    <property type="molecule type" value="Genomic_DNA"/>
</dbReference>
<dbReference type="EMBL" id="U31120">
    <property type="protein sequence ID" value="AAB01681.1"/>
    <property type="status" value="ALT_INIT"/>
    <property type="molecule type" value="Genomic_DNA"/>
</dbReference>
<dbReference type="EMBL" id="AF377331">
    <property type="protein sequence ID" value="AAK53823.1"/>
    <property type="status" value="ALT_INIT"/>
    <property type="molecule type" value="Genomic_DNA"/>
</dbReference>
<dbReference type="EMBL" id="AC004039">
    <property type="status" value="NOT_ANNOTATED_CDS"/>
    <property type="molecule type" value="Genomic_DNA"/>
</dbReference>
<dbReference type="EMBL" id="BC096139">
    <property type="protein sequence ID" value="AAH96139.1"/>
    <property type="molecule type" value="mRNA"/>
</dbReference>
<dbReference type="EMBL" id="AF043334">
    <property type="protein sequence ID" value="AAC03535.1"/>
    <property type="status" value="ALT_INIT"/>
    <property type="molecule type" value="mRNA"/>
</dbReference>
<dbReference type="CCDS" id="CCDS4157.1"/>
<dbReference type="PIR" id="I38060">
    <property type="entry name" value="A47481"/>
</dbReference>
<dbReference type="RefSeq" id="NP_002179.2">
    <property type="nucleotide sequence ID" value="NM_002188.2"/>
</dbReference>
<dbReference type="PDB" id="1GA3">
    <property type="method" value="NMR"/>
    <property type="chains" value="A=35-146"/>
</dbReference>
<dbReference type="PDB" id="1IJZ">
    <property type="method" value="NMR"/>
    <property type="chains" value="A=35-146"/>
</dbReference>
<dbReference type="PDB" id="1IK0">
    <property type="method" value="NMR"/>
    <property type="chains" value="A=35-146"/>
</dbReference>
<dbReference type="PDB" id="3BPO">
    <property type="method" value="X-ray"/>
    <property type="resolution" value="3.00 A"/>
    <property type="chains" value="A=34-146"/>
</dbReference>
<dbReference type="PDB" id="3G6D">
    <property type="method" value="X-ray"/>
    <property type="resolution" value="3.20 A"/>
    <property type="chains" value="A=35-146"/>
</dbReference>
<dbReference type="PDB" id="3L5W">
    <property type="method" value="X-ray"/>
    <property type="resolution" value="2.00 A"/>
    <property type="chains" value="I/J=35-146"/>
</dbReference>
<dbReference type="PDB" id="3L5X">
    <property type="method" value="X-ray"/>
    <property type="resolution" value="1.90 A"/>
    <property type="chains" value="A=35-146"/>
</dbReference>
<dbReference type="PDB" id="3LB6">
    <property type="method" value="X-ray"/>
    <property type="resolution" value="3.05 A"/>
    <property type="chains" value="A/B=15-146"/>
</dbReference>
<dbReference type="PDB" id="4I77">
    <property type="method" value="X-ray"/>
    <property type="resolution" value="1.90 A"/>
    <property type="chains" value="Z=35-146"/>
</dbReference>
<dbReference type="PDB" id="4PS4">
    <property type="method" value="X-ray"/>
    <property type="resolution" value="2.80 A"/>
    <property type="chains" value="A=35-146"/>
</dbReference>
<dbReference type="PDB" id="5E4E">
    <property type="method" value="X-ray"/>
    <property type="resolution" value="3.00 A"/>
    <property type="chains" value="A=34-146"/>
</dbReference>
<dbReference type="PDB" id="5L6Y">
    <property type="method" value="X-ray"/>
    <property type="resolution" value="1.99 A"/>
    <property type="chains" value="C=35-146"/>
</dbReference>
<dbReference type="PDB" id="8BLQ">
    <property type="method" value="EM"/>
    <property type="resolution" value="3.97 A"/>
    <property type="chains" value="D=38-146"/>
</dbReference>
<dbReference type="PDBsum" id="1GA3"/>
<dbReference type="PDBsum" id="1IJZ"/>
<dbReference type="PDBsum" id="1IK0"/>
<dbReference type="PDBsum" id="3BPO"/>
<dbReference type="PDBsum" id="3G6D"/>
<dbReference type="PDBsum" id="3L5W"/>
<dbReference type="PDBsum" id="3L5X"/>
<dbReference type="PDBsum" id="3LB6"/>
<dbReference type="PDBsum" id="4I77"/>
<dbReference type="PDBsum" id="4PS4"/>
<dbReference type="PDBsum" id="5E4E"/>
<dbReference type="PDBsum" id="5L6Y"/>
<dbReference type="PDBsum" id="8BLQ"/>
<dbReference type="BMRB" id="P35225"/>
<dbReference type="SMR" id="P35225"/>
<dbReference type="BioGRID" id="109810">
    <property type="interactions" value="17"/>
</dbReference>
<dbReference type="ComplexPortal" id="CPX-844">
    <property type="entry name" value="Interleukin-13 receptor-ligand alpha 1 complex"/>
</dbReference>
<dbReference type="ComplexPortal" id="CPX-847">
    <property type="entry name" value="TMEM219-Interleukin-13 decoy-receptor-ligand alpha 2 complex"/>
</dbReference>
<dbReference type="ComplexPortal" id="CPX-9184">
    <property type="entry name" value="Chitinase 3-like-1-tmem219-interleukin-13 receptor-ligand alpha-2 signalling complex"/>
</dbReference>
<dbReference type="CORUM" id="P35225"/>
<dbReference type="DIP" id="DIP-3224N"/>
<dbReference type="FunCoup" id="P35225">
    <property type="interactions" value="651"/>
</dbReference>
<dbReference type="IntAct" id="P35225">
    <property type="interactions" value="15"/>
</dbReference>
<dbReference type="MINT" id="P35225"/>
<dbReference type="STRING" id="9606.ENSP00000304915"/>
<dbReference type="BindingDB" id="P35225"/>
<dbReference type="ChEMBL" id="CHEMBL3580486"/>
<dbReference type="DrugBank" id="DB05305">
    <property type="generic name" value="Cintredekin besudotox"/>
</dbReference>
<dbReference type="DrugBank" id="DB15130">
    <property type="generic name" value="Dexpramipexole"/>
</dbReference>
<dbReference type="DrugBank" id="DB12159">
    <property type="generic name" value="Dupilumab"/>
</dbReference>
<dbReference type="DrugBank" id="DB11914">
    <property type="generic name" value="Lebrikizumab"/>
</dbReference>
<dbReference type="DrugBank" id="DB16318">
    <property type="generic name" value="Romilkimab"/>
</dbReference>
<dbReference type="DrugBank" id="DB12169">
    <property type="generic name" value="Tralokinumab"/>
</dbReference>
<dbReference type="DrugCentral" id="P35225"/>
<dbReference type="GlyCosmos" id="P35225">
    <property type="glycosylation" value="4 sites, No reported glycans"/>
</dbReference>
<dbReference type="GlyGen" id="P35225">
    <property type="glycosylation" value="5 sites"/>
</dbReference>
<dbReference type="BioMuta" id="IL13"/>
<dbReference type="DMDM" id="239938644"/>
<dbReference type="MassIVE" id="P35225"/>
<dbReference type="PaxDb" id="9606-ENSP00000304915"/>
<dbReference type="PeptideAtlas" id="P35225"/>
<dbReference type="ABCD" id="P35225">
    <property type="antibodies" value="616 sequenced antibodies"/>
</dbReference>
<dbReference type="Antibodypedia" id="14499">
    <property type="antibodies" value="1434 antibodies from 46 providers"/>
</dbReference>
<dbReference type="DNASU" id="3596"/>
<dbReference type="Ensembl" id="ENST00000304506.7">
    <property type="protein sequence ID" value="ENSP00000304915.3"/>
    <property type="gene ID" value="ENSG00000169194.10"/>
</dbReference>
<dbReference type="GeneID" id="3596"/>
<dbReference type="KEGG" id="hsa:3596"/>
<dbReference type="MANE-Select" id="ENST00000304506.7">
    <property type="protein sequence ID" value="ENSP00000304915.3"/>
    <property type="RefSeq nucleotide sequence ID" value="NM_002188.3"/>
    <property type="RefSeq protein sequence ID" value="NP_002179.2"/>
</dbReference>
<dbReference type="UCSC" id="uc003kxj.2">
    <property type="organism name" value="human"/>
</dbReference>
<dbReference type="AGR" id="HGNC:5973"/>
<dbReference type="CTD" id="3596"/>
<dbReference type="DisGeNET" id="3596"/>
<dbReference type="GeneCards" id="IL13"/>
<dbReference type="HGNC" id="HGNC:5973">
    <property type="gene designation" value="IL13"/>
</dbReference>
<dbReference type="HPA" id="ENSG00000169194">
    <property type="expression patterns" value="Tissue enriched (testis)"/>
</dbReference>
<dbReference type="MalaCards" id="IL13"/>
<dbReference type="MIM" id="147683">
    <property type="type" value="gene"/>
</dbReference>
<dbReference type="MIM" id="607154">
    <property type="type" value="phenotype"/>
</dbReference>
<dbReference type="neXtProt" id="NX_P35225"/>
<dbReference type="OpenTargets" id="ENSG00000169194"/>
<dbReference type="PharmGKB" id="PA199"/>
<dbReference type="VEuPathDB" id="HostDB:ENSG00000169194"/>
<dbReference type="eggNOG" id="ENOG502SZKX">
    <property type="taxonomic scope" value="Eukaryota"/>
</dbReference>
<dbReference type="GeneTree" id="ENSGT00390000003225"/>
<dbReference type="InParanoid" id="P35225"/>
<dbReference type="OMA" id="KTPLCNG"/>
<dbReference type="OrthoDB" id="9447464at2759"/>
<dbReference type="PAN-GO" id="P35225">
    <property type="GO annotations" value="2 GO annotations based on evolutionary models"/>
</dbReference>
<dbReference type="PhylomeDB" id="P35225"/>
<dbReference type="TreeFam" id="TF336383"/>
<dbReference type="PathwayCommons" id="P35225"/>
<dbReference type="Reactome" id="R-HSA-6785807">
    <property type="pathway name" value="Interleukin-4 and Interleukin-13 signaling"/>
</dbReference>
<dbReference type="Reactome" id="R-HSA-9012546">
    <property type="pathway name" value="Interleukin-18 signaling"/>
</dbReference>
<dbReference type="SignaLink" id="P35225"/>
<dbReference type="SIGNOR" id="P35225"/>
<dbReference type="BioGRID-ORCS" id="3596">
    <property type="hits" value="7 hits in 1144 CRISPR screens"/>
</dbReference>
<dbReference type="ChiTaRS" id="IL13">
    <property type="organism name" value="human"/>
</dbReference>
<dbReference type="EvolutionaryTrace" id="P35225"/>
<dbReference type="GeneWiki" id="Interleukin_13"/>
<dbReference type="GenomeRNAi" id="3596"/>
<dbReference type="Pharos" id="P35225">
    <property type="development level" value="Tclin"/>
</dbReference>
<dbReference type="PRO" id="PR:P35225"/>
<dbReference type="Proteomes" id="UP000005640">
    <property type="component" value="Chromosome 5"/>
</dbReference>
<dbReference type="RNAct" id="P35225">
    <property type="molecule type" value="protein"/>
</dbReference>
<dbReference type="Bgee" id="ENSG00000169194">
    <property type="expression patterns" value="Expressed in left testis and 115 other cell types or tissues"/>
</dbReference>
<dbReference type="ExpressionAtlas" id="P35225">
    <property type="expression patterns" value="baseline and differential"/>
</dbReference>
<dbReference type="GO" id="GO:0005737">
    <property type="term" value="C:cytoplasm"/>
    <property type="evidence" value="ECO:0007669"/>
    <property type="project" value="Ensembl"/>
</dbReference>
<dbReference type="GO" id="GO:0009897">
    <property type="term" value="C:external side of plasma membrane"/>
    <property type="evidence" value="ECO:0007669"/>
    <property type="project" value="Ensembl"/>
</dbReference>
<dbReference type="GO" id="GO:0005576">
    <property type="term" value="C:extracellular region"/>
    <property type="evidence" value="ECO:0000314"/>
    <property type="project" value="BHF-UCL"/>
</dbReference>
<dbReference type="GO" id="GO:0005615">
    <property type="term" value="C:extracellular space"/>
    <property type="evidence" value="ECO:0000250"/>
    <property type="project" value="UniProtKB"/>
</dbReference>
<dbReference type="GO" id="GO:0005125">
    <property type="term" value="F:cytokine activity"/>
    <property type="evidence" value="ECO:0000314"/>
    <property type="project" value="UniProt"/>
</dbReference>
<dbReference type="GO" id="GO:0005144">
    <property type="term" value="F:interleukin-13 receptor binding"/>
    <property type="evidence" value="ECO:0000318"/>
    <property type="project" value="GO_Central"/>
</dbReference>
<dbReference type="GO" id="GO:0071260">
    <property type="term" value="P:cellular response to mechanical stimulus"/>
    <property type="evidence" value="ECO:0007669"/>
    <property type="project" value="Ensembl"/>
</dbReference>
<dbReference type="GO" id="GO:0006955">
    <property type="term" value="P:immune response"/>
    <property type="evidence" value="ECO:0007669"/>
    <property type="project" value="InterPro"/>
</dbReference>
<dbReference type="GO" id="GO:0006954">
    <property type="term" value="P:inflammatory response"/>
    <property type="evidence" value="ECO:0000318"/>
    <property type="project" value="GO_Central"/>
</dbReference>
<dbReference type="GO" id="GO:0035772">
    <property type="term" value="P:interleukin-13-mediated signaling pathway"/>
    <property type="evidence" value="ECO:0000314"/>
    <property type="project" value="ARUK-UCL"/>
</dbReference>
<dbReference type="GO" id="GO:0042116">
    <property type="term" value="P:macrophage activation"/>
    <property type="evidence" value="ECO:0000316"/>
    <property type="project" value="ARUK-UCL"/>
</dbReference>
<dbReference type="GO" id="GO:0001774">
    <property type="term" value="P:microglial cell activation"/>
    <property type="evidence" value="ECO:0007669"/>
    <property type="project" value="Ensembl"/>
</dbReference>
<dbReference type="GO" id="GO:1903660">
    <property type="term" value="P:negative regulation of complement-dependent cytotoxicity"/>
    <property type="evidence" value="ECO:0000315"/>
    <property type="project" value="AgBase"/>
</dbReference>
<dbReference type="GO" id="GO:2000352">
    <property type="term" value="P:negative regulation of endothelial cell apoptotic process"/>
    <property type="evidence" value="ECO:0000315"/>
    <property type="project" value="AgBase"/>
</dbReference>
<dbReference type="GO" id="GO:0050728">
    <property type="term" value="P:negative regulation of inflammatory response"/>
    <property type="evidence" value="ECO:0000316"/>
    <property type="project" value="ARUK-UCL"/>
</dbReference>
<dbReference type="GO" id="GO:1901247">
    <property type="term" value="P:negative regulation of lung ciliated cell differentiation"/>
    <property type="evidence" value="ECO:0000303"/>
    <property type="project" value="BHF-UCL"/>
</dbReference>
<dbReference type="GO" id="GO:0071635">
    <property type="term" value="P:negative regulation of transforming growth factor beta production"/>
    <property type="evidence" value="ECO:0007669"/>
    <property type="project" value="Ensembl"/>
</dbReference>
<dbReference type="GO" id="GO:0030890">
    <property type="term" value="P:positive regulation of B cell proliferation"/>
    <property type="evidence" value="ECO:0007669"/>
    <property type="project" value="Ensembl"/>
</dbReference>
<dbReference type="GO" id="GO:0120162">
    <property type="term" value="P:positive regulation of cold-induced thermogenesis"/>
    <property type="evidence" value="ECO:0000250"/>
    <property type="project" value="YuBioLab"/>
</dbReference>
<dbReference type="GO" id="GO:0010628">
    <property type="term" value="P:positive regulation of gene expression"/>
    <property type="evidence" value="ECO:0000250"/>
    <property type="project" value="ARUK-UCL"/>
</dbReference>
<dbReference type="GO" id="GO:0002639">
    <property type="term" value="P:positive regulation of immunoglobulin production"/>
    <property type="evidence" value="ECO:0000318"/>
    <property type="project" value="GO_Central"/>
</dbReference>
<dbReference type="GO" id="GO:0032733">
    <property type="term" value="P:positive regulation of interleukin-10 production"/>
    <property type="evidence" value="ECO:0000316"/>
    <property type="project" value="ARUK-UCL"/>
</dbReference>
<dbReference type="GO" id="GO:1901251">
    <property type="term" value="P:positive regulation of lung goblet cell differentiation"/>
    <property type="evidence" value="ECO:0000303"/>
    <property type="project" value="BHF-UCL"/>
</dbReference>
<dbReference type="GO" id="GO:0043032">
    <property type="term" value="P:positive regulation of macrophage activation"/>
    <property type="evidence" value="ECO:0007669"/>
    <property type="project" value="Ensembl"/>
</dbReference>
<dbReference type="GO" id="GO:0043306">
    <property type="term" value="P:positive regulation of mast cell degranulation"/>
    <property type="evidence" value="ECO:0007669"/>
    <property type="project" value="Ensembl"/>
</dbReference>
<dbReference type="GO" id="GO:2000231">
    <property type="term" value="P:positive regulation of pancreatic stellate cell proliferation"/>
    <property type="evidence" value="ECO:0007669"/>
    <property type="project" value="Ensembl"/>
</dbReference>
<dbReference type="GO" id="GO:0050714">
    <property type="term" value="P:positive regulation of protein secretion"/>
    <property type="evidence" value="ECO:0007669"/>
    <property type="project" value="Ensembl"/>
</dbReference>
<dbReference type="GO" id="GO:0051281">
    <property type="term" value="P:positive regulation of release of sequestered calcium ion into cytosol"/>
    <property type="evidence" value="ECO:0007669"/>
    <property type="project" value="Ensembl"/>
</dbReference>
<dbReference type="GO" id="GO:0048661">
    <property type="term" value="P:positive regulation of smooth muscle cell proliferation"/>
    <property type="evidence" value="ECO:0007669"/>
    <property type="project" value="Ensembl"/>
</dbReference>
<dbReference type="GO" id="GO:0045944">
    <property type="term" value="P:positive regulation of transcription by RNA polymerase II"/>
    <property type="evidence" value="ECO:0000316"/>
    <property type="project" value="ARUK-UCL"/>
</dbReference>
<dbReference type="GO" id="GO:0010155">
    <property type="term" value="P:regulation of proton transport"/>
    <property type="evidence" value="ECO:0007669"/>
    <property type="project" value="Ensembl"/>
</dbReference>
<dbReference type="GO" id="GO:0045471">
    <property type="term" value="P:response to ethanol"/>
    <property type="evidence" value="ECO:0007669"/>
    <property type="project" value="Ensembl"/>
</dbReference>
<dbReference type="GO" id="GO:0032496">
    <property type="term" value="P:response to lipopolysaccharide"/>
    <property type="evidence" value="ECO:0007669"/>
    <property type="project" value="Ensembl"/>
</dbReference>
<dbReference type="GO" id="GO:0009624">
    <property type="term" value="P:response to nematode"/>
    <property type="evidence" value="ECO:0007669"/>
    <property type="project" value="Ensembl"/>
</dbReference>
<dbReference type="GO" id="GO:0035094">
    <property type="term" value="P:response to nicotine"/>
    <property type="evidence" value="ECO:0007669"/>
    <property type="project" value="Ensembl"/>
</dbReference>
<dbReference type="GO" id="GO:0010269">
    <property type="term" value="P:response to selenium ion"/>
    <property type="evidence" value="ECO:0007669"/>
    <property type="project" value="Ensembl"/>
</dbReference>
<dbReference type="FunFam" id="1.20.1250.10:FF:000029">
    <property type="entry name" value="Interleukin-13"/>
    <property type="match status" value="1"/>
</dbReference>
<dbReference type="Gene3D" id="1.20.1250.10">
    <property type="match status" value="1"/>
</dbReference>
<dbReference type="InterPro" id="IPR009079">
    <property type="entry name" value="4_helix_cytokine-like_core"/>
</dbReference>
<dbReference type="InterPro" id="IPR020470">
    <property type="entry name" value="IL-13"/>
</dbReference>
<dbReference type="InterPro" id="IPR001325">
    <property type="entry name" value="IL-4/IL-13"/>
</dbReference>
<dbReference type="InterPro" id="IPR018096">
    <property type="entry name" value="IL-4/IL-13_CS"/>
</dbReference>
<dbReference type="PANTHER" id="PTHR48486">
    <property type="entry name" value="INTERLEUKIN-13"/>
    <property type="match status" value="1"/>
</dbReference>
<dbReference type="PANTHER" id="PTHR48486:SF1">
    <property type="entry name" value="INTERLEUKIN-13"/>
    <property type="match status" value="1"/>
</dbReference>
<dbReference type="Pfam" id="PF03487">
    <property type="entry name" value="IL13"/>
    <property type="match status" value="1"/>
</dbReference>
<dbReference type="PRINTS" id="PR01929">
    <property type="entry name" value="INTRLEUKIN13"/>
</dbReference>
<dbReference type="SMART" id="SM00190">
    <property type="entry name" value="IL4_13"/>
    <property type="match status" value="1"/>
</dbReference>
<dbReference type="SUPFAM" id="SSF47266">
    <property type="entry name" value="4-helical cytokines"/>
    <property type="match status" value="1"/>
</dbReference>
<dbReference type="PROSITE" id="PS00838">
    <property type="entry name" value="INTERLEUKIN_4_13"/>
    <property type="match status" value="1"/>
</dbReference>
<name>IL13_HUMAN</name>
<gene>
    <name type="primary">IL13</name>
    <name type="synonym">NC30</name>
</gene>
<organism>
    <name type="scientific">Homo sapiens</name>
    <name type="common">Human</name>
    <dbReference type="NCBI Taxonomy" id="9606"/>
    <lineage>
        <taxon>Eukaryota</taxon>
        <taxon>Metazoa</taxon>
        <taxon>Chordata</taxon>
        <taxon>Craniata</taxon>
        <taxon>Vertebrata</taxon>
        <taxon>Euteleostomi</taxon>
        <taxon>Mammalia</taxon>
        <taxon>Eutheria</taxon>
        <taxon>Euarchontoglires</taxon>
        <taxon>Primates</taxon>
        <taxon>Haplorrhini</taxon>
        <taxon>Catarrhini</taxon>
        <taxon>Hominidae</taxon>
        <taxon>Homo</taxon>
    </lineage>
</organism>
<proteinExistence type="evidence at protein level"/>
<keyword id="KW-0002">3D-structure</keyword>
<keyword id="KW-0202">Cytokine</keyword>
<keyword id="KW-1015">Disulfide bond</keyword>
<keyword id="KW-0325">Glycoprotein</keyword>
<keyword id="KW-1267">Proteomics identification</keyword>
<keyword id="KW-1185">Reference proteome</keyword>
<keyword id="KW-0964">Secreted</keyword>
<keyword id="KW-0732">Signal</keyword>
<sequence length="146" mass="15788">MHPLLNPLLLALGLMALLLTTVIALTCLGGFASPGPVPPSTALRELIEELVNITQNQKAPLCNGSMVWSINLTAGMYCAALESLINVSGCSAIEKTQRMLSGFCPHKVSAGQFSSLHVRDTKIEVAQFVKDLLLHLKKLFREGQFN</sequence>
<protein>
    <recommendedName>
        <fullName>Interleukin-13</fullName>
        <shortName>IL-13</shortName>
    </recommendedName>
</protein>
<reference key="1">
    <citation type="journal article" date="1993" name="Nature">
        <title>Interleukin-13 is a new human lymphokine regulating inflammatory and immune responses.</title>
        <authorList>
            <person name="Minty A.J."/>
            <person name="Chalon P."/>
            <person name="Derocq J.-M."/>
            <person name="Dumont X."/>
            <person name="Guillemot J.-C."/>
            <person name="Kaghad M."/>
            <person name="Labit C."/>
            <person name="Leplatois P."/>
            <person name="Liauzun P."/>
            <person name="Miloux B."/>
            <person name="Minty C."/>
            <person name="Casellas P."/>
            <person name="Loison G."/>
            <person name="Lupker J."/>
            <person name="Shire D."/>
            <person name="Ferrara P."/>
            <person name="Caput D."/>
        </authorList>
    </citation>
    <scope>NUCLEOTIDE SEQUENCE [MRNA]</scope>
    <scope>FUNCTION</scope>
</reference>
<reference key="2">
    <citation type="journal article" date="1993" name="Proc. Natl. Acad. Sci. U.S.A.">
        <title>Interleukin 13, a T-cell-derived cytokine that regulates human monocyte and B-cell function.</title>
        <authorList>
            <person name="McKenzie A.N."/>
            <person name="Culpepper J.A."/>
            <person name="Waal Malefyt R."/>
            <person name="Briere F."/>
            <person name="Punnonen J."/>
            <person name="Aversa G."/>
            <person name="Sato A."/>
            <person name="Dang W."/>
            <person name="Cocks B.G."/>
            <person name="Menon S."/>
            <person name="de Vries J.E."/>
            <person name="Banchereau J."/>
            <person name="Zurawski G.R."/>
        </authorList>
    </citation>
    <scope>NUCLEOTIDE SEQUENCE [MRNA]</scope>
</reference>
<reference key="3">
    <citation type="journal article" date="1995" name="Gene">
        <title>Tandem arrangement of human genes for interleukin-4 and interleukin-13: resemblance in their organization.</title>
        <authorList>
            <person name="Smirnov D.V."/>
            <person name="Smirnova M.G."/>
            <person name="Korobko V.G."/>
            <person name="Frolova E.I."/>
        </authorList>
    </citation>
    <scope>NUCLEOTIDE SEQUENCE [GENOMIC DNA]</scope>
    <source>
        <tissue>Blood</tissue>
    </source>
</reference>
<reference key="4">
    <citation type="journal article" date="1996" name="Blood">
        <title>Coexpression of the interleukin-13 and interleukin-4 genes correlates with their physical linkage in the cytokine gene cluster on human chromosome 5q23-31.</title>
        <authorList>
            <person name="Dolganov G."/>
            <person name="Bort S."/>
            <person name="Lovett M."/>
            <person name="Burr J."/>
            <person name="Schubert L."/>
            <person name="Short D."/>
            <person name="McGurn M."/>
            <person name="Gibson C."/>
            <person name="Lewis D.B."/>
        </authorList>
    </citation>
    <scope>NUCLEOTIDE SEQUENCE [GENOMIC DNA]</scope>
</reference>
<reference key="5">
    <citation type="submission" date="2001-06" db="EMBL/GenBank/DDBJ databases">
        <authorList>
            <consortium name="SeattleSNPs variation discovery resource"/>
        </authorList>
    </citation>
    <scope>NUCLEOTIDE SEQUENCE [GENOMIC DNA]</scope>
</reference>
<reference key="6">
    <citation type="journal article" date="2004" name="Nature">
        <title>The DNA sequence and comparative analysis of human chromosome 5.</title>
        <authorList>
            <person name="Schmutz J."/>
            <person name="Martin J."/>
            <person name="Terry A."/>
            <person name="Couronne O."/>
            <person name="Grimwood J."/>
            <person name="Lowry S."/>
            <person name="Gordon L.A."/>
            <person name="Scott D."/>
            <person name="Xie G."/>
            <person name="Huang W."/>
            <person name="Hellsten U."/>
            <person name="Tran-Gyamfi M."/>
            <person name="She X."/>
            <person name="Prabhakar S."/>
            <person name="Aerts A."/>
            <person name="Altherr M."/>
            <person name="Bajorek E."/>
            <person name="Black S."/>
            <person name="Branscomb E."/>
            <person name="Caoile C."/>
            <person name="Challacombe J.F."/>
            <person name="Chan Y.M."/>
            <person name="Denys M."/>
            <person name="Detter J.C."/>
            <person name="Escobar J."/>
            <person name="Flowers D."/>
            <person name="Fotopulos D."/>
            <person name="Glavina T."/>
            <person name="Gomez M."/>
            <person name="Gonzales E."/>
            <person name="Goodstein D."/>
            <person name="Grigoriev I."/>
            <person name="Groza M."/>
            <person name="Hammon N."/>
            <person name="Hawkins T."/>
            <person name="Haydu L."/>
            <person name="Israni S."/>
            <person name="Jett J."/>
            <person name="Kadner K."/>
            <person name="Kimball H."/>
            <person name="Kobayashi A."/>
            <person name="Lopez F."/>
            <person name="Lou Y."/>
            <person name="Martinez D."/>
            <person name="Medina C."/>
            <person name="Morgan J."/>
            <person name="Nandkeshwar R."/>
            <person name="Noonan J.P."/>
            <person name="Pitluck S."/>
            <person name="Pollard M."/>
            <person name="Predki P."/>
            <person name="Priest J."/>
            <person name="Ramirez L."/>
            <person name="Retterer J."/>
            <person name="Rodriguez A."/>
            <person name="Rogers S."/>
            <person name="Salamov A."/>
            <person name="Salazar A."/>
            <person name="Thayer N."/>
            <person name="Tice H."/>
            <person name="Tsai M."/>
            <person name="Ustaszewska A."/>
            <person name="Vo N."/>
            <person name="Wheeler J."/>
            <person name="Wu K."/>
            <person name="Yang J."/>
            <person name="Dickson M."/>
            <person name="Cheng J.-F."/>
            <person name="Eichler E.E."/>
            <person name="Olsen A."/>
            <person name="Pennacchio L.A."/>
            <person name="Rokhsar D.S."/>
            <person name="Richardson P."/>
            <person name="Lucas S.M."/>
            <person name="Myers R.M."/>
            <person name="Rubin E.M."/>
        </authorList>
    </citation>
    <scope>NUCLEOTIDE SEQUENCE [LARGE SCALE GENOMIC DNA]</scope>
</reference>
<reference key="7">
    <citation type="journal article" date="2004" name="Genome Res.">
        <title>The status, quality, and expansion of the NIH full-length cDNA project: the Mammalian Gene Collection (MGC).</title>
        <authorList>
            <consortium name="The MGC Project Team"/>
        </authorList>
    </citation>
    <scope>NUCLEOTIDE SEQUENCE [LARGE SCALE MRNA]</scope>
</reference>
<reference key="8">
    <citation type="submission" date="1998-01" db="EMBL/GenBank/DDBJ databases">
        <authorList>
            <person name="Jang J.S."/>
            <person name="Kim B.E."/>
        </authorList>
    </citation>
    <scope>NUCLEOTIDE SEQUENCE [MRNA] OF 14-146</scope>
</reference>
<reference key="9">
    <citation type="journal article" date="1992" name="Nucleic Acids Res.">
        <title>The selective isolation of novel cDNAs encoded by the regions surrounding the human interleukin 4 and 5 genes.</title>
        <authorList>
            <person name="Morgan J.G."/>
            <person name="Dolganov G.M."/>
            <person name="Robbins S.E."/>
            <person name="Hinton L.M."/>
            <person name="Lovett M."/>
        </authorList>
    </citation>
    <scope>NUCLEOTIDE SEQUENCE [MRNA] OF 15-63</scope>
    <source>
        <tissue>Peripheral blood lymphocyte</tissue>
    </source>
</reference>
<reference key="10">
    <citation type="journal article" date="1994" name="J. Exp. Med.">
        <title>Interleukin 13 is a B cell stimulating factor.</title>
        <authorList>
            <person name="Defrance T."/>
            <person name="Carayon P."/>
            <person name="Billian G."/>
            <person name="Guillemot J.C."/>
            <person name="Minty A."/>
            <person name="Caput D."/>
            <person name="Ferrara P."/>
        </authorList>
    </citation>
    <scope>FUNCTION</scope>
</reference>
<reference key="11">
    <citation type="journal article" date="1996" name="J. Immunol.">
        <title>Activation of human eosinophils by IL-13. Induction of CD69 surface antigen, its relationship to messenger RNA expression, and promotion of cellular viability.</title>
        <authorList>
            <person name="Luttmann W."/>
            <person name="Knoechel B."/>
            <person name="Foerster M."/>
            <person name="Matthys H."/>
            <person name="Virchow J.C. Jr."/>
            <person name="Kroegel C."/>
        </authorList>
    </citation>
    <scope>FUNCTION</scope>
</reference>
<reference key="12">
    <citation type="journal article" date="1997" name="FEBS Lett.">
        <title>Cloning of the human IL-13R alpha1 chain and reconstitution with the IL4R alpha of a functional IL-4/IL-13 receptor complex.</title>
        <authorList>
            <person name="Miloux B."/>
            <person name="Laurent P."/>
            <person name="Bonnin O."/>
            <person name="Lupker J."/>
            <person name="Caput D."/>
            <person name="Vita N."/>
            <person name="Ferrara P."/>
        </authorList>
    </citation>
    <scope>FUNCTION</scope>
</reference>
<reference key="13">
    <citation type="journal article" date="1996" name="Blood">
        <title>Interleukin-4 (IL-4) and IL-13 bind to a shared heterodimeric complex on endothelial cells mediating vascular cell adhesion molecule-1 induction in the absence of the common gamma chain.</title>
        <authorList>
            <person name="Schnyder B."/>
            <person name="Lugli S."/>
            <person name="Feng N."/>
            <person name="Etter H."/>
            <person name="Lutz R.A."/>
            <person name="Ryffel B."/>
            <person name="Sugamura K."/>
            <person name="Wunderli-Allenspach H."/>
            <person name="Moser R."/>
        </authorList>
    </citation>
    <scope>FUNCTION</scope>
</reference>
<reference key="14">
    <citation type="journal article" date="2011" name="J. Immunol.">
        <title>IL-13 antibodies influence IL-13 clearance in humans by modulating scavenger activity of IL-13Ralpha2.</title>
        <authorList>
            <person name="Kasaian M.T."/>
            <person name="Raible D."/>
            <person name="Marquette K."/>
            <person name="Cook T.A."/>
            <person name="Zhou S."/>
            <person name="Tan X.Y."/>
            <person name="Tchistiakova L."/>
        </authorList>
    </citation>
    <scope>FUNCTION</scope>
</reference>
<reference key="15">
    <citation type="journal article" date="2001" name="J. Mol. Biol.">
        <title>Solution structure of human IL-13 and implication for receptor binding.</title>
        <authorList>
            <person name="Moy F.J."/>
            <person name="Diblasio E."/>
            <person name="Wilhelm J."/>
            <person name="Powers R."/>
        </authorList>
    </citation>
    <scope>STRUCTURE BY NMR OF 35-146</scope>
    <scope>DISULFIDE BONDS</scope>
</reference>
<reference key="16">
    <citation type="journal article" date="2010" name="Structure">
        <title>Molecular basis for shared cytokine recognition revealed in the structure of an unusually high affinity complex between IL-13 and IL-13Ralpha2.</title>
        <authorList>
            <person name="Lupardus P.J."/>
            <person name="Birnbaum M.E."/>
            <person name="Garcia K.C."/>
        </authorList>
    </citation>
    <scope>X-RAY CRYSTALLOGRAPHY (3.05 ANGSTROMS) OF 15-146 IN COMPLEX WITH IL13RA2</scope>
    <scope>DISULFIDE BONDS</scope>
</reference>
<reference key="17">
    <citation type="journal article" date="2000" name="Hum. Mol. Genet.">
        <title>Genetic variants of IL-13 signalling and human asthma and atopy.</title>
        <authorList>
            <person name="Heinzmann A."/>
            <person name="Mao X.-Q."/>
            <person name="Akaiwa M."/>
            <person name="Kreomer R.T."/>
            <person name="Gao P.-S."/>
            <person name="Ohshima K."/>
            <person name="Umeshita R."/>
            <person name="Abe Y."/>
            <person name="Braun S."/>
            <person name="Yamashita T."/>
            <person name="Roberts M.H."/>
            <person name="Sugimoto R."/>
            <person name="Arima K."/>
            <person name="Arinobu Y."/>
            <person name="Yu B."/>
            <person name="Kruse S."/>
            <person name="Enomoto T."/>
            <person name="Dake Y."/>
            <person name="Kawai M."/>
            <person name="Shimazu S."/>
            <person name="Sasaki S."/>
            <person name="Adra C.N."/>
            <person name="Kitaichi M."/>
            <person name="Inoue H."/>
            <person name="Yamauchi K."/>
            <person name="Tomichi N."/>
            <person name="Kurimoto F."/>
            <person name="Hamasaki N."/>
            <person name="Hopkin J.M."/>
            <person name="Izuhara K."/>
            <person name="Shirakawa T."/>
            <person name="Deichmann K.A."/>
        </authorList>
    </citation>
    <scope>INVOLVEMENT IN ALRH</scope>
    <scope>VARIANT ARG-144</scope>
</reference>
<reference key="18">
    <citation type="journal article" date="2001" name="Am. J. Respir. Cell Mol. Biol.">
        <title>Identification and association of polymorphisms in the interleukin-13 gene with asthma and atopy in a Dutch population.</title>
        <authorList>
            <person name="Howard T.D."/>
            <person name="Whittaker P.A."/>
            <person name="Zaiman A.L."/>
            <person name="Koppelman G.H."/>
            <person name="Xu J."/>
            <person name="Hanley M.T."/>
            <person name="Meyers D.A."/>
            <person name="Postma D.S."/>
            <person name="Bleecker E.R."/>
        </authorList>
    </citation>
    <scope>INVOLVEMENT IN ALRH</scope>
    <scope>VARIANT ARG-144</scope>
</reference>
<reference key="19">
    <citation type="journal article" date="2003" name="Hum. Genet.">
        <title>A common IL-13 Arg130Gln single nucleotide polymorphism among Chinese atopy patients with allergic rhinitis.</title>
        <authorList>
            <person name="Wang M."/>
            <person name="Xing Z.-M."/>
            <person name="Lu C."/>
            <person name="Ma Y.-X."/>
            <person name="Yu D.-L."/>
            <person name="Yan Z."/>
            <person name="Wang S.-W."/>
            <person name="Yu L.-S."/>
        </authorList>
    </citation>
    <scope>INVOLVEMENT IN ALRH</scope>
    <scope>VARIANT ARG-144</scope>
</reference>
<comment type="function">
    <text evidence="1 2 9 10 11 12 13 14 15">Cytokine that plays important roles in allergic inflammation and immune response to parasite infection (PubMed:8096327, PubMed:8097324). Synergizes with IL2 in regulating interferon-gamma synthesis (PubMed:8096327). Stimulates B-cell proliferation, and activation of eosinophils, basophils, and mast cells (PubMed:7903680, PubMed:8759755). Plays an important role in controlling IL33 activity by modulating the production of transmembrane and soluble forms of interleukin-1 receptor-like 1/IL1RL1 (By similarity). Displays the capacity to antagonize Th1-driven proinflammatory immune response and downregulates synthesis of many proinflammatory cytokines including IL1, IL6, IL10, IL12 and TNF-alpha through a mechanism that partially involves suppression of NF-kappa-B (By similarity). Also functions on nonhematopoietic cells, including endothelial cells where it induces vascular cell adhesion protein 1/VCAM1, which is important in the recruitment of eosinophils (PubMed:8639787). Exerts its biological effects through its receptors which comprises the IL4R chain and the IL13RA1 chain, to activate JAK1 and TYK2, leading to the activation of STAT6 (PubMed:9013879). Aside from IL13RA1, another receptor IL13RA2 acts as a high affinity decoy for IL13 and mediates internalization and depletion of extracellular IL13 (PubMed:21622864).</text>
</comment>
<comment type="subunit">
    <text evidence="8">Interacts with IL13RA2.</text>
</comment>
<comment type="interaction">
    <interactant intactId="EBI-1647828">
        <id>P35225</id>
    </interactant>
    <interactant intactId="EBI-1391535">
        <id>P78552</id>
        <label>IL13RA1</label>
    </interactant>
    <organismsDiffer>false</organismsDiffer>
    <experiments>7</experiments>
</comment>
<comment type="interaction">
    <interactant intactId="EBI-1647828">
        <id>P35225</id>
    </interactant>
    <interactant intactId="EBI-4320063">
        <id>Q14627</id>
        <label>IL13RA2</label>
    </interactant>
    <organismsDiffer>false</organismsDiffer>
    <experiments>9</experiments>
</comment>
<comment type="subcellular location">
    <subcellularLocation>
        <location>Secreted</location>
    </subcellularLocation>
</comment>
<comment type="disease" evidence="4 6 7">
    <disease id="DI-02868">
        <name>Allergic rhinitis</name>
        <acronym>ALRH</acronym>
        <description>A common disease with complex inheritance characterized by mucosal inflammation caused by allergen exposure.</description>
        <dbReference type="MIM" id="607154"/>
    </disease>
    <text>Disease susceptibility may be associated with variants affecting the gene represented in this entry.</text>
</comment>
<comment type="similarity">
    <text evidence="16">Belongs to the IL-4/IL-13 family.</text>
</comment>
<comment type="caution">
    <text evidence="16">It is uncertain whether Met-1 or Met-15 is the initiator.</text>
</comment>
<comment type="sequence caution" evidence="16">
    <conflict type="erroneous initiation">
        <sequence resource="EMBL-CDS" id="AAA36107"/>
    </conflict>
    <text>Truncated N-terminus.</text>
</comment>
<comment type="sequence caution" evidence="16">
    <conflict type="erroneous initiation">
        <sequence resource="EMBL-CDS" id="AAA83738"/>
    </conflict>
    <text>Truncated N-terminus.</text>
</comment>
<comment type="sequence caution" evidence="16">
    <conflict type="erroneous initiation">
        <sequence resource="EMBL-CDS" id="AAB01681"/>
    </conflict>
    <text>Truncated N-terminus.</text>
</comment>
<comment type="sequence caution" evidence="16">
    <conflict type="erroneous initiation">
        <sequence resource="EMBL-CDS" id="AAC03535"/>
    </conflict>
    <text>Truncated N-terminus.</text>
</comment>
<comment type="sequence caution" evidence="16">
    <conflict type="erroneous initiation">
        <sequence resource="EMBL-CDS" id="AAK53823"/>
    </conflict>
    <text>Truncated N-terminus.</text>
</comment>
<comment type="sequence caution" evidence="16">
    <conflict type="erroneous initiation">
        <sequence resource="EMBL-CDS" id="CAA48824"/>
    </conflict>
    <text>Truncated N-terminus.</text>
</comment>
<comment type="online information" name="Wikipedia">
    <link uri="https://en.wikipedia.org/wiki/Interleukin_13"/>
    <text>Interleukin-13 entry</text>
</comment>
<evidence type="ECO:0000250" key="1">
    <source>
        <dbReference type="UniProtKB" id="P20109"/>
    </source>
</evidence>
<evidence type="ECO:0000250" key="2">
    <source>
        <dbReference type="UniProtKB" id="P42203"/>
    </source>
</evidence>
<evidence type="ECO:0000255" key="3"/>
<evidence type="ECO:0000269" key="4">
    <source>
    </source>
</evidence>
<evidence type="ECO:0000269" key="5">
    <source>
    </source>
</evidence>
<evidence type="ECO:0000269" key="6">
    <source>
    </source>
</evidence>
<evidence type="ECO:0000269" key="7">
    <source>
    </source>
</evidence>
<evidence type="ECO:0000269" key="8">
    <source>
    </source>
</evidence>
<evidence type="ECO:0000269" key="9">
    <source>
    </source>
</evidence>
<evidence type="ECO:0000269" key="10">
    <source>
    </source>
</evidence>
<evidence type="ECO:0000269" key="11">
    <source>
    </source>
</evidence>
<evidence type="ECO:0000269" key="12">
    <source>
    </source>
</evidence>
<evidence type="ECO:0000269" key="13">
    <source>
    </source>
</evidence>
<evidence type="ECO:0000269" key="14">
    <source>
    </source>
</evidence>
<evidence type="ECO:0000269" key="15">
    <source>
    </source>
</evidence>
<evidence type="ECO:0000305" key="16"/>
<evidence type="ECO:0007829" key="17">
    <source>
        <dbReference type="PDB" id="3L5X"/>
    </source>
</evidence>
<evidence type="ECO:0007829" key="18">
    <source>
        <dbReference type="PDB" id="3LB6"/>
    </source>
</evidence>
<evidence type="ECO:0007829" key="19">
    <source>
        <dbReference type="PDB" id="5E4E"/>
    </source>
</evidence>
<accession>P35225</accession>
<accession>O43644</accession>
<accession>Q4VB52</accession>
<accession>Q9UDC7</accession>